<gene>
    <name type="primary">DAD1</name>
    <name type="synonym">DAD-1</name>
    <name type="ordered locus">Os04g0397000</name>
    <name type="ordered locus">LOC_Os04g32550</name>
    <name type="ORF">OsJ_014065</name>
    <name type="ORF">OSJNBa0039C07.3</name>
</gene>
<name>DAD1_ORYSJ</name>
<keyword id="KW-0053">Apoptosis</keyword>
<keyword id="KW-0256">Endoplasmic reticulum</keyword>
<keyword id="KW-0472">Membrane</keyword>
<keyword id="KW-1185">Reference proteome</keyword>
<keyword id="KW-0812">Transmembrane</keyword>
<keyword id="KW-1133">Transmembrane helix</keyword>
<proteinExistence type="inferred from homology"/>
<accession>Q0JDK9</accession>
<accession>B7E891</accession>
<accession>O50070</accession>
<accession>Q7F9I2</accession>
<accession>Q84N35</accession>
<feature type="chain" id="PRO_0000124028" description="Dolichyl-diphosphooligosaccharide--protein glycosyltransferase subunit DAD1">
    <location>
        <begin position="1"/>
        <end position="114"/>
    </location>
</feature>
<feature type="topological domain" description="Cytoplasmic" evidence="3">
    <location>
        <begin position="1"/>
        <end position="30"/>
    </location>
</feature>
<feature type="transmembrane region" description="Helical" evidence="3">
    <location>
        <begin position="31"/>
        <end position="51"/>
    </location>
</feature>
<feature type="topological domain" description="Lumenal" evidence="3">
    <location>
        <begin position="52"/>
        <end position="54"/>
    </location>
</feature>
<feature type="transmembrane region" description="Helical" evidence="3">
    <location>
        <begin position="55"/>
        <end position="75"/>
    </location>
</feature>
<feature type="topological domain" description="Cytoplasmic" evidence="3">
    <location>
        <begin position="76"/>
        <end position="93"/>
    </location>
</feature>
<feature type="transmembrane region" description="Helical" evidence="3">
    <location>
        <begin position="94"/>
        <end position="114"/>
    </location>
</feature>
<organism>
    <name type="scientific">Oryza sativa subsp. japonica</name>
    <name type="common">Rice</name>
    <dbReference type="NCBI Taxonomy" id="39947"/>
    <lineage>
        <taxon>Eukaryota</taxon>
        <taxon>Viridiplantae</taxon>
        <taxon>Streptophyta</taxon>
        <taxon>Embryophyta</taxon>
        <taxon>Tracheophyta</taxon>
        <taxon>Spermatophyta</taxon>
        <taxon>Magnoliopsida</taxon>
        <taxon>Liliopsida</taxon>
        <taxon>Poales</taxon>
        <taxon>Poaceae</taxon>
        <taxon>BOP clade</taxon>
        <taxon>Oryzoideae</taxon>
        <taxon>Oryzeae</taxon>
        <taxon>Oryzinae</taxon>
        <taxon>Oryza</taxon>
        <taxon>Oryza sativa</taxon>
    </lineage>
</organism>
<evidence type="ECO:0000250" key="1"/>
<evidence type="ECO:0000250" key="2">
    <source>
        <dbReference type="UniProtKB" id="P46964"/>
    </source>
</evidence>
<evidence type="ECO:0000255" key="3"/>
<evidence type="ECO:0000305" key="4"/>
<dbReference type="EMBL" id="D89726">
    <property type="protein sequence ID" value="BAA24072.1"/>
    <property type="molecule type" value="mRNA"/>
</dbReference>
<dbReference type="EMBL" id="D89727">
    <property type="protein sequence ID" value="BAA24104.1"/>
    <property type="molecule type" value="Genomic_DNA"/>
</dbReference>
<dbReference type="EMBL" id="AL731591">
    <property type="protein sequence ID" value="CAE05147.2"/>
    <property type="molecule type" value="Genomic_DNA"/>
</dbReference>
<dbReference type="EMBL" id="AP008210">
    <property type="protein sequence ID" value="BAF14578.1"/>
    <property type="molecule type" value="Genomic_DNA"/>
</dbReference>
<dbReference type="EMBL" id="AP014960">
    <property type="protein sequence ID" value="BAS89011.1"/>
    <property type="molecule type" value="Genomic_DNA"/>
</dbReference>
<dbReference type="EMBL" id="CM000141">
    <property type="protein sequence ID" value="EAZ30582.1"/>
    <property type="molecule type" value="Genomic_DNA"/>
</dbReference>
<dbReference type="EMBL" id="AK063198">
    <property type="protein sequence ID" value="BAG88588.1"/>
    <property type="molecule type" value="mRNA"/>
</dbReference>
<dbReference type="PIR" id="T03016">
    <property type="entry name" value="T03016"/>
</dbReference>
<dbReference type="RefSeq" id="XP_015635531.1">
    <property type="nucleotide sequence ID" value="XM_015780045.1"/>
</dbReference>
<dbReference type="SMR" id="Q0JDK9"/>
<dbReference type="FunCoup" id="Q0JDK9">
    <property type="interactions" value="2710"/>
</dbReference>
<dbReference type="IntAct" id="Q0JDK9">
    <property type="interactions" value="3"/>
</dbReference>
<dbReference type="STRING" id="39947.Q0JDK9"/>
<dbReference type="PaxDb" id="39947-Q0JDK9"/>
<dbReference type="EnsemblPlants" id="Os04t0397000-01">
    <property type="protein sequence ID" value="Os04t0397000-01"/>
    <property type="gene ID" value="Os04g0397000"/>
</dbReference>
<dbReference type="Gramene" id="Os04t0397000-01">
    <property type="protein sequence ID" value="Os04t0397000-01"/>
    <property type="gene ID" value="Os04g0397000"/>
</dbReference>
<dbReference type="KEGG" id="dosa:Os04g0397000"/>
<dbReference type="eggNOG" id="KOG1746">
    <property type="taxonomic scope" value="Eukaryota"/>
</dbReference>
<dbReference type="HOGENOM" id="CLU_111220_2_1_1"/>
<dbReference type="InParanoid" id="Q0JDK9"/>
<dbReference type="OMA" id="HIILHIV"/>
<dbReference type="OrthoDB" id="445566at2759"/>
<dbReference type="UniPathway" id="UPA00378"/>
<dbReference type="Proteomes" id="UP000000763">
    <property type="component" value="Chromosome 4"/>
</dbReference>
<dbReference type="Proteomes" id="UP000007752">
    <property type="component" value="Chromosome 4"/>
</dbReference>
<dbReference type="Proteomes" id="UP000059680">
    <property type="component" value="Chromosome 4"/>
</dbReference>
<dbReference type="GO" id="GO:0008250">
    <property type="term" value="C:oligosaccharyltransferase complex"/>
    <property type="evidence" value="ECO:0000318"/>
    <property type="project" value="GO_Central"/>
</dbReference>
<dbReference type="GO" id="GO:0006487">
    <property type="term" value="P:protein N-linked glycosylation"/>
    <property type="evidence" value="ECO:0000318"/>
    <property type="project" value="GO_Central"/>
</dbReference>
<dbReference type="InterPro" id="IPR003038">
    <property type="entry name" value="DAD/Ost2"/>
</dbReference>
<dbReference type="PANTHER" id="PTHR10705">
    <property type="entry name" value="DOLICHYL-DIPHOSPHOOLIGOSACCHARIDE--PROTEIN GLYCOSYLTRANSFERASE SUBUNIT DAD1"/>
    <property type="match status" value="1"/>
</dbReference>
<dbReference type="PANTHER" id="PTHR10705:SF0">
    <property type="entry name" value="DOLICHYL-DIPHOSPHOOLIGOSACCHARIDE--PROTEIN GLYCOSYLTRANSFERASE SUBUNIT DAD1"/>
    <property type="match status" value="1"/>
</dbReference>
<dbReference type="Pfam" id="PF02109">
    <property type="entry name" value="DAD"/>
    <property type="match status" value="1"/>
</dbReference>
<dbReference type="PIRSF" id="PIRSF005588">
    <property type="entry name" value="DAD"/>
    <property type="match status" value="1"/>
</dbReference>
<reference key="1">
    <citation type="journal article" date="1997" name="Plant Cell Physiol.">
        <title>dad-1, A putative programmed cell death suppressor gene in rice.</title>
        <authorList>
            <person name="Tanaka Y."/>
            <person name="Makishima T."/>
            <person name="Sasabe M."/>
            <person name="Ichinose Y."/>
            <person name="Shiraishi T."/>
            <person name="Nishimoto T."/>
            <person name="Yamada T."/>
        </authorList>
    </citation>
    <scope>NUCLEOTIDE SEQUENCE [GENOMIC DNA / MRNA]</scope>
    <source>
        <strain>cv. Nipponbare</strain>
    </source>
</reference>
<reference key="2">
    <citation type="journal article" date="2002" name="Nature">
        <title>Sequence and analysis of rice chromosome 4.</title>
        <authorList>
            <person name="Feng Q."/>
            <person name="Zhang Y."/>
            <person name="Hao P."/>
            <person name="Wang S."/>
            <person name="Fu G."/>
            <person name="Huang Y."/>
            <person name="Li Y."/>
            <person name="Zhu J."/>
            <person name="Liu Y."/>
            <person name="Hu X."/>
            <person name="Jia P."/>
            <person name="Zhang Y."/>
            <person name="Zhao Q."/>
            <person name="Ying K."/>
            <person name="Yu S."/>
            <person name="Tang Y."/>
            <person name="Weng Q."/>
            <person name="Zhang L."/>
            <person name="Lu Y."/>
            <person name="Mu J."/>
            <person name="Lu Y."/>
            <person name="Zhang L.S."/>
            <person name="Yu Z."/>
            <person name="Fan D."/>
            <person name="Liu X."/>
            <person name="Lu T."/>
            <person name="Li C."/>
            <person name="Wu Y."/>
            <person name="Sun T."/>
            <person name="Lei H."/>
            <person name="Li T."/>
            <person name="Hu H."/>
            <person name="Guan J."/>
            <person name="Wu M."/>
            <person name="Zhang R."/>
            <person name="Zhou B."/>
            <person name="Chen Z."/>
            <person name="Chen L."/>
            <person name="Jin Z."/>
            <person name="Wang R."/>
            <person name="Yin H."/>
            <person name="Cai Z."/>
            <person name="Ren S."/>
            <person name="Lv G."/>
            <person name="Gu W."/>
            <person name="Zhu G."/>
            <person name="Tu Y."/>
            <person name="Jia J."/>
            <person name="Zhang Y."/>
            <person name="Chen J."/>
            <person name="Kang H."/>
            <person name="Chen X."/>
            <person name="Shao C."/>
            <person name="Sun Y."/>
            <person name="Hu Q."/>
            <person name="Zhang X."/>
            <person name="Zhang W."/>
            <person name="Wang L."/>
            <person name="Ding C."/>
            <person name="Sheng H."/>
            <person name="Gu J."/>
            <person name="Chen S."/>
            <person name="Ni L."/>
            <person name="Zhu F."/>
            <person name="Chen W."/>
            <person name="Lan L."/>
            <person name="Lai Y."/>
            <person name="Cheng Z."/>
            <person name="Gu M."/>
            <person name="Jiang J."/>
            <person name="Li J."/>
            <person name="Hong G."/>
            <person name="Xue Y."/>
            <person name="Han B."/>
        </authorList>
    </citation>
    <scope>NUCLEOTIDE SEQUENCE [LARGE SCALE GENOMIC DNA]</scope>
    <source>
        <strain>cv. Nipponbare</strain>
    </source>
</reference>
<reference key="3">
    <citation type="journal article" date="2005" name="Nature">
        <title>The map-based sequence of the rice genome.</title>
        <authorList>
            <consortium name="International rice genome sequencing project (IRGSP)"/>
        </authorList>
    </citation>
    <scope>NUCLEOTIDE SEQUENCE [LARGE SCALE GENOMIC DNA]</scope>
    <source>
        <strain>cv. Nipponbare</strain>
    </source>
</reference>
<reference key="4">
    <citation type="journal article" date="2008" name="Nucleic Acids Res.">
        <title>The rice annotation project database (RAP-DB): 2008 update.</title>
        <authorList>
            <consortium name="The rice annotation project (RAP)"/>
        </authorList>
    </citation>
    <scope>GENOME REANNOTATION</scope>
    <source>
        <strain>cv. Nipponbare</strain>
    </source>
</reference>
<reference key="5">
    <citation type="journal article" date="2013" name="Rice">
        <title>Improvement of the Oryza sativa Nipponbare reference genome using next generation sequence and optical map data.</title>
        <authorList>
            <person name="Kawahara Y."/>
            <person name="de la Bastide M."/>
            <person name="Hamilton J.P."/>
            <person name="Kanamori H."/>
            <person name="McCombie W.R."/>
            <person name="Ouyang S."/>
            <person name="Schwartz D.C."/>
            <person name="Tanaka T."/>
            <person name="Wu J."/>
            <person name="Zhou S."/>
            <person name="Childs K.L."/>
            <person name="Davidson R.M."/>
            <person name="Lin H."/>
            <person name="Quesada-Ocampo L."/>
            <person name="Vaillancourt B."/>
            <person name="Sakai H."/>
            <person name="Lee S.S."/>
            <person name="Kim J."/>
            <person name="Numa H."/>
            <person name="Itoh T."/>
            <person name="Buell C.R."/>
            <person name="Matsumoto T."/>
        </authorList>
    </citation>
    <scope>GENOME REANNOTATION</scope>
    <source>
        <strain>cv. Nipponbare</strain>
    </source>
</reference>
<reference key="6">
    <citation type="journal article" date="2005" name="PLoS Biol.">
        <title>The genomes of Oryza sativa: a history of duplications.</title>
        <authorList>
            <person name="Yu J."/>
            <person name="Wang J."/>
            <person name="Lin W."/>
            <person name="Li S."/>
            <person name="Li H."/>
            <person name="Zhou J."/>
            <person name="Ni P."/>
            <person name="Dong W."/>
            <person name="Hu S."/>
            <person name="Zeng C."/>
            <person name="Zhang J."/>
            <person name="Zhang Y."/>
            <person name="Li R."/>
            <person name="Xu Z."/>
            <person name="Li S."/>
            <person name="Li X."/>
            <person name="Zheng H."/>
            <person name="Cong L."/>
            <person name="Lin L."/>
            <person name="Yin J."/>
            <person name="Geng J."/>
            <person name="Li G."/>
            <person name="Shi J."/>
            <person name="Liu J."/>
            <person name="Lv H."/>
            <person name="Li J."/>
            <person name="Wang J."/>
            <person name="Deng Y."/>
            <person name="Ran L."/>
            <person name="Shi X."/>
            <person name="Wang X."/>
            <person name="Wu Q."/>
            <person name="Li C."/>
            <person name="Ren X."/>
            <person name="Wang J."/>
            <person name="Wang X."/>
            <person name="Li D."/>
            <person name="Liu D."/>
            <person name="Zhang X."/>
            <person name="Ji Z."/>
            <person name="Zhao W."/>
            <person name="Sun Y."/>
            <person name="Zhang Z."/>
            <person name="Bao J."/>
            <person name="Han Y."/>
            <person name="Dong L."/>
            <person name="Ji J."/>
            <person name="Chen P."/>
            <person name="Wu S."/>
            <person name="Liu J."/>
            <person name="Xiao Y."/>
            <person name="Bu D."/>
            <person name="Tan J."/>
            <person name="Yang L."/>
            <person name="Ye C."/>
            <person name="Zhang J."/>
            <person name="Xu J."/>
            <person name="Zhou Y."/>
            <person name="Yu Y."/>
            <person name="Zhang B."/>
            <person name="Zhuang S."/>
            <person name="Wei H."/>
            <person name="Liu B."/>
            <person name="Lei M."/>
            <person name="Yu H."/>
            <person name="Li Y."/>
            <person name="Xu H."/>
            <person name="Wei S."/>
            <person name="He X."/>
            <person name="Fang L."/>
            <person name="Zhang Z."/>
            <person name="Zhang Y."/>
            <person name="Huang X."/>
            <person name="Su Z."/>
            <person name="Tong W."/>
            <person name="Li J."/>
            <person name="Tong Z."/>
            <person name="Li S."/>
            <person name="Ye J."/>
            <person name="Wang L."/>
            <person name="Fang L."/>
            <person name="Lei T."/>
            <person name="Chen C.-S."/>
            <person name="Chen H.-C."/>
            <person name="Xu Z."/>
            <person name="Li H."/>
            <person name="Huang H."/>
            <person name="Zhang F."/>
            <person name="Xu H."/>
            <person name="Li N."/>
            <person name="Zhao C."/>
            <person name="Li S."/>
            <person name="Dong L."/>
            <person name="Huang Y."/>
            <person name="Li L."/>
            <person name="Xi Y."/>
            <person name="Qi Q."/>
            <person name="Li W."/>
            <person name="Zhang B."/>
            <person name="Hu W."/>
            <person name="Zhang Y."/>
            <person name="Tian X."/>
            <person name="Jiao Y."/>
            <person name="Liang X."/>
            <person name="Jin J."/>
            <person name="Gao L."/>
            <person name="Zheng W."/>
            <person name="Hao B."/>
            <person name="Liu S.-M."/>
            <person name="Wang W."/>
            <person name="Yuan L."/>
            <person name="Cao M."/>
            <person name="McDermott J."/>
            <person name="Samudrala R."/>
            <person name="Wang J."/>
            <person name="Wong G.K.-S."/>
            <person name="Yang H."/>
        </authorList>
    </citation>
    <scope>NUCLEOTIDE SEQUENCE [LARGE SCALE GENOMIC DNA]</scope>
    <source>
        <strain>cv. Nipponbare</strain>
    </source>
</reference>
<reference key="7">
    <citation type="journal article" date="2003" name="Science">
        <title>Collection, mapping, and annotation of over 28,000 cDNA clones from japonica rice.</title>
        <authorList>
            <consortium name="The rice full-length cDNA consortium"/>
        </authorList>
    </citation>
    <scope>NUCLEOTIDE SEQUENCE [LARGE SCALE MRNA]</scope>
    <source>
        <strain>cv. Nipponbare</strain>
    </source>
</reference>
<sequence>MPRATSDAKLLIQSLGKAYAATPTNLKIIDLYVVFAVATALIQVVYMGIVGSFPFNSFLSGVLSCIGTAVLAVCLRIQVNKDNKEFKDLPPERAFADFVLCNLVLHLVIMNFLG</sequence>
<protein>
    <recommendedName>
        <fullName>Dolichyl-diphosphooligosaccharide--protein glycosyltransferase subunit DAD1</fullName>
        <shortName>Oligosaccharyl transferase subunit DAD1</shortName>
    </recommendedName>
    <alternativeName>
        <fullName>Defender against apoptotic death 1 protein</fullName>
    </alternativeName>
    <alternativeName>
        <fullName>Defender against cell death 1</fullName>
        <shortName>DAD-1</shortName>
    </alternativeName>
</protein>
<comment type="function">
    <text evidence="2">Subunit of the oligosaccharyl transferase (OST) complex that catalyzes the initial transfer of a defined glycan (Glc(3)Man(9)GlcNAc(2) in eukaryotes) from the lipid carrier dolichol-pyrophosphate to an asparagine residue within an Asn-X-Ser/Thr consensus motif in nascent polypeptide chains, the first step in protein N-glycosylation. N-glycosylation occurs cotranslationally and the complex associates with the Sec61 complex at the channel-forming translocon complex that mediates protein translocation across the endoplasmic reticulum (ER). All subunits are required for a maximal enzyme activity.</text>
</comment>
<comment type="pathway">
    <text>Protein modification; protein glycosylation.</text>
</comment>
<comment type="subunit">
    <text evidence="2">Component of the oligosaccharyltransferase (OST) complex.</text>
</comment>
<comment type="subcellular location">
    <subcellularLocation>
        <location evidence="1">Endoplasmic reticulum membrane</location>
        <topology evidence="1">Multi-pass membrane protein</topology>
    </subcellularLocation>
</comment>
<comment type="similarity">
    <text evidence="4">Belongs to the DAD/OST2 family.</text>
</comment>